<sequence>MTTSSERPETSVDRKLLEILVCPVTKGPLEFDAARQELISRGAKLAYPIRDGIPIMLPEEARKLG</sequence>
<proteinExistence type="inferred from homology"/>
<reference key="1">
    <citation type="submission" date="2006-03" db="EMBL/GenBank/DDBJ databases">
        <title>Complete sequence of Rhodopseudomonas palustris BisB5.</title>
        <authorList>
            <consortium name="US DOE Joint Genome Institute"/>
            <person name="Copeland A."/>
            <person name="Lucas S."/>
            <person name="Lapidus A."/>
            <person name="Barry K."/>
            <person name="Detter J.C."/>
            <person name="Glavina del Rio T."/>
            <person name="Hammon N."/>
            <person name="Israni S."/>
            <person name="Dalin E."/>
            <person name="Tice H."/>
            <person name="Pitluck S."/>
            <person name="Chain P."/>
            <person name="Malfatti S."/>
            <person name="Shin M."/>
            <person name="Vergez L."/>
            <person name="Schmutz J."/>
            <person name="Larimer F."/>
            <person name="Land M."/>
            <person name="Hauser L."/>
            <person name="Pelletier D.A."/>
            <person name="Kyrpides N."/>
            <person name="Lykidis A."/>
            <person name="Oda Y."/>
            <person name="Harwood C.S."/>
            <person name="Richardson P."/>
        </authorList>
    </citation>
    <scope>NUCLEOTIDE SEQUENCE [LARGE SCALE GENOMIC DNA]</scope>
    <source>
        <strain>BisB5</strain>
    </source>
</reference>
<accession>Q13DZ7</accession>
<protein>
    <recommendedName>
        <fullName evidence="1">UPF0434 protein RPD_0454</fullName>
    </recommendedName>
</protein>
<gene>
    <name type="ordered locus">RPD_0454</name>
</gene>
<evidence type="ECO:0000255" key="1">
    <source>
        <dbReference type="HAMAP-Rule" id="MF_01187"/>
    </source>
</evidence>
<comment type="similarity">
    <text evidence="1">Belongs to the UPF0434 family.</text>
</comment>
<dbReference type="EMBL" id="CP000283">
    <property type="protein sequence ID" value="ABE37692.1"/>
    <property type="molecule type" value="Genomic_DNA"/>
</dbReference>
<dbReference type="SMR" id="Q13DZ7"/>
<dbReference type="STRING" id="316057.RPD_0454"/>
<dbReference type="KEGG" id="rpd:RPD_0454"/>
<dbReference type="eggNOG" id="COG2835">
    <property type="taxonomic scope" value="Bacteria"/>
</dbReference>
<dbReference type="HOGENOM" id="CLU_155659_2_2_5"/>
<dbReference type="BioCyc" id="RPAL316057:RPD_RS02325-MONOMER"/>
<dbReference type="Proteomes" id="UP000001818">
    <property type="component" value="Chromosome"/>
</dbReference>
<dbReference type="GO" id="GO:0005829">
    <property type="term" value="C:cytosol"/>
    <property type="evidence" value="ECO:0007669"/>
    <property type="project" value="TreeGrafter"/>
</dbReference>
<dbReference type="FunFam" id="2.20.25.10:FF:000002">
    <property type="entry name" value="UPF0434 protein YcaR"/>
    <property type="match status" value="1"/>
</dbReference>
<dbReference type="Gene3D" id="2.20.25.10">
    <property type="match status" value="1"/>
</dbReference>
<dbReference type="HAMAP" id="MF_01187">
    <property type="entry name" value="UPF0434"/>
    <property type="match status" value="1"/>
</dbReference>
<dbReference type="InterPro" id="IPR005651">
    <property type="entry name" value="Trm112-like"/>
</dbReference>
<dbReference type="PANTHER" id="PTHR33505:SF4">
    <property type="entry name" value="PROTEIN PREY, MITOCHONDRIAL"/>
    <property type="match status" value="1"/>
</dbReference>
<dbReference type="PANTHER" id="PTHR33505">
    <property type="entry name" value="ZGC:162634"/>
    <property type="match status" value="1"/>
</dbReference>
<dbReference type="Pfam" id="PF03966">
    <property type="entry name" value="Trm112p"/>
    <property type="match status" value="1"/>
</dbReference>
<dbReference type="SUPFAM" id="SSF158997">
    <property type="entry name" value="Trm112p-like"/>
    <property type="match status" value="1"/>
</dbReference>
<name>Y454_RHOPS</name>
<organism>
    <name type="scientific">Rhodopseudomonas palustris (strain BisB5)</name>
    <dbReference type="NCBI Taxonomy" id="316057"/>
    <lineage>
        <taxon>Bacteria</taxon>
        <taxon>Pseudomonadati</taxon>
        <taxon>Pseudomonadota</taxon>
        <taxon>Alphaproteobacteria</taxon>
        <taxon>Hyphomicrobiales</taxon>
        <taxon>Nitrobacteraceae</taxon>
        <taxon>Rhodopseudomonas</taxon>
    </lineage>
</organism>
<feature type="chain" id="PRO_0000291154" description="UPF0434 protein RPD_0454">
    <location>
        <begin position="1"/>
        <end position="65"/>
    </location>
</feature>